<dbReference type="EMBL" id="AF000989">
    <property type="protein sequence ID" value="AAC51836.1"/>
    <property type="molecule type" value="mRNA"/>
</dbReference>
<dbReference type="EMBL" id="AC006371">
    <property type="protein sequence ID" value="AAD54509.1"/>
    <property type="molecule type" value="Genomic_DNA"/>
</dbReference>
<dbReference type="EMBL" id="BC022482">
    <property type="status" value="NOT_ANNOTATED_CDS"/>
    <property type="molecule type" value="mRNA"/>
</dbReference>
<dbReference type="EMBL" id="BC119763">
    <property type="protein sequence ID" value="AAI19764.1"/>
    <property type="molecule type" value="mRNA"/>
</dbReference>
<dbReference type="EMBL" id="BC119764">
    <property type="protein sequence ID" value="AAI19765.1"/>
    <property type="molecule type" value="mRNA"/>
</dbReference>
<dbReference type="CCDS" id="CCDS14786.1"/>
<dbReference type="RefSeq" id="NP_004193.1">
    <property type="nucleotide sequence ID" value="NM_004202.3"/>
</dbReference>
<dbReference type="SMR" id="O14604"/>
<dbReference type="BioGRID" id="114543">
    <property type="interactions" value="37"/>
</dbReference>
<dbReference type="FunCoup" id="O14604">
    <property type="interactions" value="29"/>
</dbReference>
<dbReference type="IntAct" id="O14604">
    <property type="interactions" value="34"/>
</dbReference>
<dbReference type="STRING" id="9606.ENSP00000284856"/>
<dbReference type="GlyGen" id="O14604">
    <property type="glycosylation" value="1 site, 1 O-linked glycan (1 site)"/>
</dbReference>
<dbReference type="iPTMnet" id="O14604"/>
<dbReference type="PhosphoSitePlus" id="O14604"/>
<dbReference type="BioMuta" id="TMSB4Y"/>
<dbReference type="jPOST" id="O14604"/>
<dbReference type="MassIVE" id="O14604"/>
<dbReference type="PeptideAtlas" id="O14604"/>
<dbReference type="ProteomicsDB" id="48110"/>
<dbReference type="Antibodypedia" id="58313">
    <property type="antibodies" value="37 antibodies from 10 providers"/>
</dbReference>
<dbReference type="DNASU" id="9087"/>
<dbReference type="Ensembl" id="ENST00000284856.4">
    <property type="protein sequence ID" value="ENSP00000284856.3"/>
    <property type="gene ID" value="ENSG00000154620.6"/>
</dbReference>
<dbReference type="GeneID" id="9087"/>
<dbReference type="KEGG" id="hsa:9087"/>
<dbReference type="MANE-Select" id="ENST00000284856.4">
    <property type="protein sequence ID" value="ENSP00000284856.3"/>
    <property type="RefSeq nucleotide sequence ID" value="NM_004202.3"/>
    <property type="RefSeq protein sequence ID" value="NP_004193.1"/>
</dbReference>
<dbReference type="UCSC" id="uc004ftb.4">
    <property type="organism name" value="human"/>
</dbReference>
<dbReference type="AGR" id="HGNC:11882"/>
<dbReference type="CTD" id="9087"/>
<dbReference type="DisGeNET" id="9087"/>
<dbReference type="GeneCards" id="TMSB4Y"/>
<dbReference type="HGNC" id="HGNC:11882">
    <property type="gene designation" value="TMSB4Y"/>
</dbReference>
<dbReference type="HPA" id="ENSG00000154620">
    <property type="expression patterns" value="Tissue enhanced (intestine)"/>
</dbReference>
<dbReference type="MIM" id="400017">
    <property type="type" value="gene"/>
</dbReference>
<dbReference type="neXtProt" id="NX_O14604"/>
<dbReference type="OpenTargets" id="ENSG00000154620"/>
<dbReference type="PharmGKB" id="PA36582"/>
<dbReference type="VEuPathDB" id="HostDB:ENSG00000154620"/>
<dbReference type="GeneTree" id="ENSGT00940000154433"/>
<dbReference type="HOGENOM" id="CLU_208046_0_0_1"/>
<dbReference type="InParanoid" id="O14604"/>
<dbReference type="PAN-GO" id="O14604">
    <property type="GO annotations" value="4 GO annotations based on evolutionary models"/>
</dbReference>
<dbReference type="PhylomeDB" id="O14604"/>
<dbReference type="PathwayCommons" id="O14604"/>
<dbReference type="SignaLink" id="O14604"/>
<dbReference type="BioGRID-ORCS" id="9087">
    <property type="hits" value="40 hits in 703 CRISPR screens"/>
</dbReference>
<dbReference type="GeneWiki" id="Thymosin_beta-4,_Y-chromosomal"/>
<dbReference type="GenomeRNAi" id="9087"/>
<dbReference type="Pharos" id="O14604">
    <property type="development level" value="Tdark"/>
</dbReference>
<dbReference type="PRO" id="PR:O14604"/>
<dbReference type="Proteomes" id="UP000005640">
    <property type="component" value="Chromosome Y"/>
</dbReference>
<dbReference type="Bgee" id="ENSG00000154620">
    <property type="expression patterns" value="Expressed in primordial germ cell in gonad and 82 other cell types or tissues"/>
</dbReference>
<dbReference type="GO" id="GO:0005737">
    <property type="term" value="C:cytoplasm"/>
    <property type="evidence" value="ECO:0000318"/>
    <property type="project" value="GO_Central"/>
</dbReference>
<dbReference type="GO" id="GO:0005856">
    <property type="term" value="C:cytoskeleton"/>
    <property type="evidence" value="ECO:0007669"/>
    <property type="project" value="UniProtKB-SubCell"/>
</dbReference>
<dbReference type="GO" id="GO:0005829">
    <property type="term" value="C:cytosol"/>
    <property type="evidence" value="ECO:0007669"/>
    <property type="project" value="Ensembl"/>
</dbReference>
<dbReference type="GO" id="GO:0005634">
    <property type="term" value="C:nucleus"/>
    <property type="evidence" value="ECO:0007669"/>
    <property type="project" value="Ensembl"/>
</dbReference>
<dbReference type="GO" id="GO:0003785">
    <property type="term" value="F:actin monomer binding"/>
    <property type="evidence" value="ECO:0000318"/>
    <property type="project" value="GO_Central"/>
</dbReference>
<dbReference type="GO" id="GO:0007015">
    <property type="term" value="P:actin filament organization"/>
    <property type="evidence" value="ECO:0007669"/>
    <property type="project" value="InterPro"/>
</dbReference>
<dbReference type="GO" id="GO:0008064">
    <property type="term" value="P:regulation of actin polymerization or depolymerization"/>
    <property type="evidence" value="ECO:0000304"/>
    <property type="project" value="ProtInc"/>
</dbReference>
<dbReference type="GO" id="GO:0030334">
    <property type="term" value="P:regulation of cell migration"/>
    <property type="evidence" value="ECO:0000318"/>
    <property type="project" value="GO_Central"/>
</dbReference>
<dbReference type="FunFam" id="1.20.5.520:FF:000001">
    <property type="entry name" value="Thymosin beta"/>
    <property type="match status" value="1"/>
</dbReference>
<dbReference type="Gene3D" id="1.20.5.520">
    <property type="entry name" value="Single helix bin"/>
    <property type="match status" value="1"/>
</dbReference>
<dbReference type="InterPro" id="IPR001152">
    <property type="entry name" value="Beta-thymosin"/>
</dbReference>
<dbReference type="InterPro" id="IPR038386">
    <property type="entry name" value="Beta-thymosin_sf"/>
</dbReference>
<dbReference type="PANTHER" id="PTHR12021">
    <property type="entry name" value="THYMOSIN BETA"/>
    <property type="match status" value="1"/>
</dbReference>
<dbReference type="PANTHER" id="PTHR12021:SF18">
    <property type="entry name" value="THYMOSIN BETA-4, Y-CHROMOSOMAL"/>
    <property type="match status" value="1"/>
</dbReference>
<dbReference type="Pfam" id="PF01290">
    <property type="entry name" value="Thymosin"/>
    <property type="match status" value="1"/>
</dbReference>
<dbReference type="PIRSF" id="PIRSF001828">
    <property type="entry name" value="Thymosin_beta"/>
    <property type="match status" value="1"/>
</dbReference>
<dbReference type="SMART" id="SM00152">
    <property type="entry name" value="THY"/>
    <property type="match status" value="1"/>
</dbReference>
<dbReference type="PROSITE" id="PS00500">
    <property type="entry name" value="THYMOSIN_B4"/>
    <property type="match status" value="1"/>
</dbReference>
<name>TYB4Y_HUMAN</name>
<proteinExistence type="evidence at protein level"/>
<reference key="1">
    <citation type="journal article" date="1997" name="Science">
        <title>Functional coherence of the human Y chromosome.</title>
        <authorList>
            <person name="Lahn B.T."/>
            <person name="Page D.C."/>
        </authorList>
    </citation>
    <scope>NUCLEOTIDE SEQUENCE [MRNA]</scope>
</reference>
<reference key="2">
    <citation type="journal article" date="2003" name="Nature">
        <title>The male-specific region of the human Y chromosome is a mosaic of discrete sequence classes.</title>
        <authorList>
            <person name="Skaletsky H."/>
            <person name="Kuroda-Kawaguchi T."/>
            <person name="Minx P.J."/>
            <person name="Cordum H.S."/>
            <person name="Hillier L.W."/>
            <person name="Brown L.G."/>
            <person name="Repping S."/>
            <person name="Pyntikova T."/>
            <person name="Ali J."/>
            <person name="Bieri T."/>
            <person name="Chinwalla A."/>
            <person name="Delehaunty A."/>
            <person name="Delehaunty K."/>
            <person name="Du H."/>
            <person name="Fewell G."/>
            <person name="Fulton L."/>
            <person name="Fulton R."/>
            <person name="Graves T.A."/>
            <person name="Hou S.-F."/>
            <person name="Latrielle P."/>
            <person name="Leonard S."/>
            <person name="Mardis E."/>
            <person name="Maupin R."/>
            <person name="McPherson J."/>
            <person name="Miner T."/>
            <person name="Nash W."/>
            <person name="Nguyen C."/>
            <person name="Ozersky P."/>
            <person name="Pepin K."/>
            <person name="Rock S."/>
            <person name="Rohlfing T."/>
            <person name="Scott K."/>
            <person name="Schultz B."/>
            <person name="Strong C."/>
            <person name="Tin-Wollam A."/>
            <person name="Yang S.-P."/>
            <person name="Waterston R.H."/>
            <person name="Wilson R.K."/>
            <person name="Rozen S."/>
            <person name="Page D.C."/>
        </authorList>
    </citation>
    <scope>NUCLEOTIDE SEQUENCE [LARGE SCALE GENOMIC DNA]</scope>
</reference>
<reference key="3">
    <citation type="journal article" date="2004" name="Genome Res.">
        <title>The status, quality, and expansion of the NIH full-length cDNA project: the Mammalian Gene Collection (MGC).</title>
        <authorList>
            <consortium name="The MGC Project Team"/>
        </authorList>
    </citation>
    <scope>NUCLEOTIDE SEQUENCE [LARGE SCALE MRNA]</scope>
    <source>
        <tissue>Hypothalamus</tissue>
    </source>
</reference>
<accession>O14604</accession>
<accession>Q0VDA2</accession>
<sequence>MSDKPGMAEIEKFDKSKLKKTETQEKNPLSSKETIEQERQAGES</sequence>
<evidence type="ECO:0000250" key="1"/>
<evidence type="ECO:0000256" key="2">
    <source>
        <dbReference type="SAM" id="MobiDB-lite"/>
    </source>
</evidence>
<evidence type="ECO:0000305" key="3"/>
<gene>
    <name type="primary">TMSB4Y</name>
    <name type="synonym">TB4Y</name>
</gene>
<organism>
    <name type="scientific">Homo sapiens</name>
    <name type="common">Human</name>
    <dbReference type="NCBI Taxonomy" id="9606"/>
    <lineage>
        <taxon>Eukaryota</taxon>
        <taxon>Metazoa</taxon>
        <taxon>Chordata</taxon>
        <taxon>Craniata</taxon>
        <taxon>Vertebrata</taxon>
        <taxon>Euteleostomi</taxon>
        <taxon>Mammalia</taxon>
        <taxon>Eutheria</taxon>
        <taxon>Euarchontoglires</taxon>
        <taxon>Primates</taxon>
        <taxon>Haplorrhini</taxon>
        <taxon>Catarrhini</taxon>
        <taxon>Hominidae</taxon>
        <taxon>Homo</taxon>
    </lineage>
</organism>
<comment type="function">
    <text evidence="1">Plays an important role in the organization of the cytoskeleton. Binds to and sequesters actin monomers (G actin) and therefore inhibits actin polymerization (By similarity).</text>
</comment>
<comment type="interaction">
    <interactant intactId="EBI-751196">
        <id>O14604</id>
    </interactant>
    <interactant intactId="EBI-750109">
        <id>Q9NYB0</id>
        <label>TERF2IP</label>
    </interactant>
    <organismsDiffer>false</organismsDiffer>
    <experiments>2</experiments>
</comment>
<comment type="subcellular location">
    <subcellularLocation>
        <location evidence="1">Cytoplasm</location>
        <location evidence="1">Cytoskeleton</location>
    </subcellularLocation>
</comment>
<comment type="tissue specificity">
    <text>Ubiquitous.</text>
</comment>
<comment type="similarity">
    <text evidence="3">Belongs to the thymosin beta family.</text>
</comment>
<feature type="chain" id="PRO_0000045921" description="Thymosin beta-4, Y-chromosomal">
    <location>
        <begin position="1"/>
        <end position="44"/>
    </location>
</feature>
<feature type="region of interest" description="Disordered" evidence="2">
    <location>
        <begin position="1"/>
        <end position="44"/>
    </location>
</feature>
<feature type="compositionally biased region" description="Basic and acidic residues" evidence="2">
    <location>
        <begin position="9"/>
        <end position="25"/>
    </location>
</feature>
<feature type="compositionally biased region" description="Basic and acidic residues" evidence="2">
    <location>
        <begin position="33"/>
        <end position="44"/>
    </location>
</feature>
<protein>
    <recommendedName>
        <fullName>Thymosin beta-4, Y-chromosomal</fullName>
    </recommendedName>
</protein>
<keyword id="KW-0009">Actin-binding</keyword>
<keyword id="KW-0963">Cytoplasm</keyword>
<keyword id="KW-0206">Cytoskeleton</keyword>
<keyword id="KW-1267">Proteomics identification</keyword>
<keyword id="KW-1185">Reference proteome</keyword>